<proteinExistence type="inferred from homology"/>
<gene>
    <name evidence="1" type="primary">ybeY</name>
    <name type="ordered locus">Achl_1968</name>
</gene>
<dbReference type="EC" id="3.1.-.-" evidence="1"/>
<dbReference type="EMBL" id="CP001341">
    <property type="protein sequence ID" value="ACL39942.1"/>
    <property type="molecule type" value="Genomic_DNA"/>
</dbReference>
<dbReference type="RefSeq" id="WP_015937161.1">
    <property type="nucleotide sequence ID" value="NC_011886.1"/>
</dbReference>
<dbReference type="SMR" id="B8H8R4"/>
<dbReference type="STRING" id="452863.Achl_1968"/>
<dbReference type="KEGG" id="ach:Achl_1968"/>
<dbReference type="eggNOG" id="COG0319">
    <property type="taxonomic scope" value="Bacteria"/>
</dbReference>
<dbReference type="HOGENOM" id="CLU_106710_3_2_11"/>
<dbReference type="OrthoDB" id="9807740at2"/>
<dbReference type="Proteomes" id="UP000002505">
    <property type="component" value="Chromosome"/>
</dbReference>
<dbReference type="GO" id="GO:0005737">
    <property type="term" value="C:cytoplasm"/>
    <property type="evidence" value="ECO:0007669"/>
    <property type="project" value="UniProtKB-SubCell"/>
</dbReference>
<dbReference type="GO" id="GO:0004222">
    <property type="term" value="F:metalloendopeptidase activity"/>
    <property type="evidence" value="ECO:0007669"/>
    <property type="project" value="InterPro"/>
</dbReference>
<dbReference type="GO" id="GO:0004521">
    <property type="term" value="F:RNA endonuclease activity"/>
    <property type="evidence" value="ECO:0007669"/>
    <property type="project" value="UniProtKB-UniRule"/>
</dbReference>
<dbReference type="GO" id="GO:0008270">
    <property type="term" value="F:zinc ion binding"/>
    <property type="evidence" value="ECO:0007669"/>
    <property type="project" value="UniProtKB-UniRule"/>
</dbReference>
<dbReference type="GO" id="GO:0006364">
    <property type="term" value="P:rRNA processing"/>
    <property type="evidence" value="ECO:0007669"/>
    <property type="project" value="UniProtKB-UniRule"/>
</dbReference>
<dbReference type="Gene3D" id="3.40.390.30">
    <property type="entry name" value="Metalloproteases ('zincins'), catalytic domain"/>
    <property type="match status" value="1"/>
</dbReference>
<dbReference type="HAMAP" id="MF_00009">
    <property type="entry name" value="Endoribonucl_YbeY"/>
    <property type="match status" value="1"/>
</dbReference>
<dbReference type="InterPro" id="IPR023091">
    <property type="entry name" value="MetalPrtase_cat_dom_sf_prd"/>
</dbReference>
<dbReference type="InterPro" id="IPR002036">
    <property type="entry name" value="YbeY"/>
</dbReference>
<dbReference type="InterPro" id="IPR020549">
    <property type="entry name" value="YbeY_CS"/>
</dbReference>
<dbReference type="NCBIfam" id="TIGR00043">
    <property type="entry name" value="rRNA maturation RNase YbeY"/>
    <property type="match status" value="1"/>
</dbReference>
<dbReference type="PANTHER" id="PTHR46986">
    <property type="entry name" value="ENDORIBONUCLEASE YBEY, CHLOROPLASTIC"/>
    <property type="match status" value="1"/>
</dbReference>
<dbReference type="PANTHER" id="PTHR46986:SF1">
    <property type="entry name" value="ENDORIBONUCLEASE YBEY, CHLOROPLASTIC"/>
    <property type="match status" value="1"/>
</dbReference>
<dbReference type="Pfam" id="PF02130">
    <property type="entry name" value="YbeY"/>
    <property type="match status" value="1"/>
</dbReference>
<dbReference type="SUPFAM" id="SSF55486">
    <property type="entry name" value="Metalloproteases ('zincins'), catalytic domain"/>
    <property type="match status" value="1"/>
</dbReference>
<dbReference type="PROSITE" id="PS01306">
    <property type="entry name" value="UPF0054"/>
    <property type="match status" value="1"/>
</dbReference>
<comment type="function">
    <text evidence="1">Single strand-specific metallo-endoribonuclease involved in late-stage 70S ribosome quality control and in maturation of the 3' terminus of the 16S rRNA.</text>
</comment>
<comment type="cofactor">
    <cofactor evidence="1">
        <name>Zn(2+)</name>
        <dbReference type="ChEBI" id="CHEBI:29105"/>
    </cofactor>
    <text evidence="1">Binds 1 zinc ion.</text>
</comment>
<comment type="subcellular location">
    <subcellularLocation>
        <location evidence="1">Cytoplasm</location>
    </subcellularLocation>
</comment>
<comment type="similarity">
    <text evidence="1">Belongs to the endoribonuclease YbeY family.</text>
</comment>
<organism>
    <name type="scientific">Pseudarthrobacter chlorophenolicus (strain ATCC 700700 / DSM 12829 / CIP 107037 / JCM 12360 / KCTC 9906 / NCIMB 13794 / A6)</name>
    <name type="common">Arthrobacter chlorophenolicus</name>
    <dbReference type="NCBI Taxonomy" id="452863"/>
    <lineage>
        <taxon>Bacteria</taxon>
        <taxon>Bacillati</taxon>
        <taxon>Actinomycetota</taxon>
        <taxon>Actinomycetes</taxon>
        <taxon>Micrococcales</taxon>
        <taxon>Micrococcaceae</taxon>
        <taxon>Pseudarthrobacter</taxon>
    </lineage>
</organism>
<name>YBEY_PSECP</name>
<accession>B8H8R4</accession>
<sequence length="157" mass="17171">MSIEVNNESGVEVDEAGLVALSRYIFEQLYIHPQAELSILLVDEPAMEKLHIELMDEPGATDVLSVPMDDLTPGTPDRPTPQGMLGDIAICPQVAQVQAKNAGHALQDEMLLLTTHGILHLLGYDHAEPEEKEEMFGLQRELLTGFTGKEAPAETTQ</sequence>
<protein>
    <recommendedName>
        <fullName evidence="1">Endoribonuclease YbeY</fullName>
        <ecNumber evidence="1">3.1.-.-</ecNumber>
    </recommendedName>
</protein>
<reference key="1">
    <citation type="submission" date="2009-01" db="EMBL/GenBank/DDBJ databases">
        <title>Complete sequence of chromosome of Arthrobacter chlorophenolicus A6.</title>
        <authorList>
            <consortium name="US DOE Joint Genome Institute"/>
            <person name="Lucas S."/>
            <person name="Copeland A."/>
            <person name="Lapidus A."/>
            <person name="Glavina del Rio T."/>
            <person name="Tice H."/>
            <person name="Bruce D."/>
            <person name="Goodwin L."/>
            <person name="Pitluck S."/>
            <person name="Goltsman E."/>
            <person name="Clum A."/>
            <person name="Larimer F."/>
            <person name="Land M."/>
            <person name="Hauser L."/>
            <person name="Kyrpides N."/>
            <person name="Mikhailova N."/>
            <person name="Jansson J."/>
            <person name="Richardson P."/>
        </authorList>
    </citation>
    <scope>NUCLEOTIDE SEQUENCE [LARGE SCALE GENOMIC DNA]</scope>
    <source>
        <strain>ATCC 700700 / DSM 12829 / CIP 107037 / JCM 12360 / KCTC 9906 / NCIMB 13794 / A6</strain>
    </source>
</reference>
<evidence type="ECO:0000255" key="1">
    <source>
        <dbReference type="HAMAP-Rule" id="MF_00009"/>
    </source>
</evidence>
<feature type="chain" id="PRO_1000199945" description="Endoribonuclease YbeY">
    <location>
        <begin position="1"/>
        <end position="157"/>
    </location>
</feature>
<feature type="binding site" evidence="1">
    <location>
        <position position="116"/>
    </location>
    <ligand>
        <name>Zn(2+)</name>
        <dbReference type="ChEBI" id="CHEBI:29105"/>
        <note>catalytic</note>
    </ligand>
</feature>
<feature type="binding site" evidence="1">
    <location>
        <position position="120"/>
    </location>
    <ligand>
        <name>Zn(2+)</name>
        <dbReference type="ChEBI" id="CHEBI:29105"/>
        <note>catalytic</note>
    </ligand>
</feature>
<feature type="binding site" evidence="1">
    <location>
        <position position="126"/>
    </location>
    <ligand>
        <name>Zn(2+)</name>
        <dbReference type="ChEBI" id="CHEBI:29105"/>
        <note>catalytic</note>
    </ligand>
</feature>
<keyword id="KW-0963">Cytoplasm</keyword>
<keyword id="KW-0255">Endonuclease</keyword>
<keyword id="KW-0378">Hydrolase</keyword>
<keyword id="KW-0479">Metal-binding</keyword>
<keyword id="KW-0540">Nuclease</keyword>
<keyword id="KW-0690">Ribosome biogenesis</keyword>
<keyword id="KW-0698">rRNA processing</keyword>
<keyword id="KW-0862">Zinc</keyword>